<keyword id="KW-0007">Acetylation</keyword>
<keyword id="KW-0072">Autophagy</keyword>
<keyword id="KW-0963">Cytoplasm</keyword>
<keyword id="KW-0967">Endosome</keyword>
<keyword id="KW-0391">Immunity</keyword>
<keyword id="KW-0395">Inflammatory response</keyword>
<keyword id="KW-0399">Innate immunity</keyword>
<keyword id="KW-0597">Phosphoprotein</keyword>
<keyword id="KW-1185">Reference proteome</keyword>
<keyword id="KW-0677">Repeat</keyword>
<sequence length="274" mass="30345">MATTVSTQRGPVYIGELPQDFLRITPTQQQQQIQLDAQAAQQLQYGGTVGTVGRLSITVVQAKLAKNYGMTRMDPYCRLRLGYAVYETPTAHNGAKNPRWNKVIQCTVPPGVDSFYLEIFDERAFSMDDRIAWTHITIPESLKQGQVEDEWYSLSGRQGDDKEGMINLVMSYTSLPAAMMMPPQPVVLMPTVYQQGVGYVPIAGMPAVCSPGMVPMAMPPPAVAPQPRCNEEDLKAIQDMFPNMDREVIRSVLEAQRGNKDAAINSLLQMGEES</sequence>
<dbReference type="EMBL" id="AJ242971">
    <property type="protein sequence ID" value="CAB58121.1"/>
    <property type="molecule type" value="mRNA"/>
</dbReference>
<dbReference type="EMBL" id="AK015062">
    <property type="status" value="NOT_ANNOTATED_CDS"/>
    <property type="molecule type" value="mRNA"/>
</dbReference>
<dbReference type="EMBL" id="AK016482">
    <property type="protein sequence ID" value="BAB30262.1"/>
    <property type="molecule type" value="mRNA"/>
</dbReference>
<dbReference type="EMBL" id="AK045422">
    <property type="protein sequence ID" value="BAC32357.1"/>
    <property type="molecule type" value="mRNA"/>
</dbReference>
<dbReference type="EMBL" id="AK049263">
    <property type="protein sequence ID" value="BAC33643.1"/>
    <property type="molecule type" value="mRNA"/>
</dbReference>
<dbReference type="EMBL" id="AK161312">
    <property type="protein sequence ID" value="BAE36316.1"/>
    <property type="molecule type" value="mRNA"/>
</dbReference>
<dbReference type="EMBL" id="BC062139">
    <property type="protein sequence ID" value="AAH62139.1"/>
    <property type="molecule type" value="mRNA"/>
</dbReference>
<dbReference type="CCDS" id="CCDS22020.1"/>
<dbReference type="RefSeq" id="NP_076253.1">
    <property type="nucleotide sequence ID" value="NM_023764.4"/>
</dbReference>
<dbReference type="SMR" id="Q9QZ06"/>
<dbReference type="BioGRID" id="207666">
    <property type="interactions" value="16"/>
</dbReference>
<dbReference type="FunCoup" id="Q9QZ06">
    <property type="interactions" value="1493"/>
</dbReference>
<dbReference type="IntAct" id="Q9QZ06">
    <property type="interactions" value="7"/>
</dbReference>
<dbReference type="MINT" id="Q9QZ06"/>
<dbReference type="STRING" id="10090.ENSMUSP00000001950"/>
<dbReference type="iPTMnet" id="Q9QZ06"/>
<dbReference type="PhosphoSitePlus" id="Q9QZ06"/>
<dbReference type="SwissPalm" id="Q9QZ06"/>
<dbReference type="REPRODUCTION-2DPAGE" id="IPI00136618"/>
<dbReference type="jPOST" id="Q9QZ06"/>
<dbReference type="PaxDb" id="10090-ENSMUSP00000001950"/>
<dbReference type="PeptideAtlas" id="Q9QZ06"/>
<dbReference type="ProteomicsDB" id="259491"/>
<dbReference type="Pumba" id="Q9QZ06"/>
<dbReference type="Antibodypedia" id="10168">
    <property type="antibodies" value="565 antibodies from 40 providers"/>
</dbReference>
<dbReference type="DNASU" id="54473"/>
<dbReference type="Ensembl" id="ENSMUST00000001950.12">
    <property type="protein sequence ID" value="ENSMUSP00000001950.6"/>
    <property type="gene ID" value="ENSMUSG00000025139.15"/>
</dbReference>
<dbReference type="GeneID" id="54473"/>
<dbReference type="KEGG" id="mmu:54473"/>
<dbReference type="UCSC" id="uc009kmd.1">
    <property type="organism name" value="mouse"/>
</dbReference>
<dbReference type="AGR" id="MGI:1891808"/>
<dbReference type="CTD" id="54472"/>
<dbReference type="MGI" id="MGI:1891808">
    <property type="gene designation" value="Tollip"/>
</dbReference>
<dbReference type="VEuPathDB" id="HostDB:ENSMUSG00000025139"/>
<dbReference type="eggNOG" id="ENOG502QWQA">
    <property type="taxonomic scope" value="Eukaryota"/>
</dbReference>
<dbReference type="GeneTree" id="ENSGT00390000013104"/>
<dbReference type="HOGENOM" id="CLU_067725_0_0_1"/>
<dbReference type="InParanoid" id="Q9QZ06"/>
<dbReference type="OMA" id="IYIQIFD"/>
<dbReference type="OrthoDB" id="9942608at2759"/>
<dbReference type="PhylomeDB" id="Q9QZ06"/>
<dbReference type="TreeFam" id="TF324180"/>
<dbReference type="Reactome" id="R-MMU-6798695">
    <property type="pathway name" value="Neutrophil degranulation"/>
</dbReference>
<dbReference type="Reactome" id="R-MMU-9020702">
    <property type="pathway name" value="Interleukin-1 signaling"/>
</dbReference>
<dbReference type="BioGRID-ORCS" id="54473">
    <property type="hits" value="0 hits in 79 CRISPR screens"/>
</dbReference>
<dbReference type="CD-CODE" id="CE726F99">
    <property type="entry name" value="Postsynaptic density"/>
</dbReference>
<dbReference type="ChiTaRS" id="Tollip">
    <property type="organism name" value="mouse"/>
</dbReference>
<dbReference type="PRO" id="PR:Q9QZ06"/>
<dbReference type="Proteomes" id="UP000000589">
    <property type="component" value="Chromosome 7"/>
</dbReference>
<dbReference type="RNAct" id="Q9QZ06">
    <property type="molecule type" value="protein"/>
</dbReference>
<dbReference type="Bgee" id="ENSMUSG00000025139">
    <property type="expression patterns" value="Expressed in spermatocyte and 261 other cell types or tissues"/>
</dbReference>
<dbReference type="ExpressionAtlas" id="Q9QZ06">
    <property type="expression patterns" value="baseline and differential"/>
</dbReference>
<dbReference type="GO" id="GO:0005769">
    <property type="term" value="C:early endosome"/>
    <property type="evidence" value="ECO:0007669"/>
    <property type="project" value="UniProtKB-SubCell"/>
</dbReference>
<dbReference type="GO" id="GO:0016604">
    <property type="term" value="C:nuclear body"/>
    <property type="evidence" value="ECO:0007669"/>
    <property type="project" value="Ensembl"/>
</dbReference>
<dbReference type="GO" id="GO:0048471">
    <property type="term" value="C:perinuclear region of cytoplasm"/>
    <property type="evidence" value="ECO:0007669"/>
    <property type="project" value="Ensembl"/>
</dbReference>
<dbReference type="GO" id="GO:0032991">
    <property type="term" value="C:protein-containing complex"/>
    <property type="evidence" value="ECO:0000314"/>
    <property type="project" value="UniProtKB"/>
</dbReference>
<dbReference type="GO" id="GO:0005150">
    <property type="term" value="F:interleukin-1, type I receptor binding"/>
    <property type="evidence" value="ECO:0007669"/>
    <property type="project" value="Ensembl"/>
</dbReference>
<dbReference type="GO" id="GO:0019900">
    <property type="term" value="F:kinase binding"/>
    <property type="evidence" value="ECO:0007669"/>
    <property type="project" value="Ensembl"/>
</dbReference>
<dbReference type="GO" id="GO:0060090">
    <property type="term" value="F:molecular adaptor activity"/>
    <property type="evidence" value="ECO:0007669"/>
    <property type="project" value="Ensembl"/>
</dbReference>
<dbReference type="GO" id="GO:0032183">
    <property type="term" value="F:SUMO binding"/>
    <property type="evidence" value="ECO:0007669"/>
    <property type="project" value="Ensembl"/>
</dbReference>
<dbReference type="GO" id="GO:0035325">
    <property type="term" value="F:Toll-like receptor binding"/>
    <property type="evidence" value="ECO:0007669"/>
    <property type="project" value="Ensembl"/>
</dbReference>
<dbReference type="GO" id="GO:0043130">
    <property type="term" value="F:ubiquitin binding"/>
    <property type="evidence" value="ECO:0007669"/>
    <property type="project" value="InterPro"/>
</dbReference>
<dbReference type="GO" id="GO:0031624">
    <property type="term" value="F:ubiquitin conjugating enzyme binding"/>
    <property type="evidence" value="ECO:0007669"/>
    <property type="project" value="Ensembl"/>
</dbReference>
<dbReference type="GO" id="GO:0031625">
    <property type="term" value="F:ubiquitin protein ligase binding"/>
    <property type="evidence" value="ECO:0007669"/>
    <property type="project" value="Ensembl"/>
</dbReference>
<dbReference type="GO" id="GO:0006914">
    <property type="term" value="P:autophagy"/>
    <property type="evidence" value="ECO:0007669"/>
    <property type="project" value="UniProtKB-KW"/>
</dbReference>
<dbReference type="GO" id="GO:0030855">
    <property type="term" value="P:epithelial cell differentiation"/>
    <property type="evidence" value="ECO:0007669"/>
    <property type="project" value="Ensembl"/>
</dbReference>
<dbReference type="GO" id="GO:0006954">
    <property type="term" value="P:inflammatory response"/>
    <property type="evidence" value="ECO:0007669"/>
    <property type="project" value="UniProtKB-KW"/>
</dbReference>
<dbReference type="GO" id="GO:0045087">
    <property type="term" value="P:innate immune response"/>
    <property type="evidence" value="ECO:0007669"/>
    <property type="project" value="UniProtKB-KW"/>
</dbReference>
<dbReference type="GO" id="GO:0070498">
    <property type="term" value="P:interleukin-1-mediated signaling pathway"/>
    <property type="evidence" value="ECO:0000314"/>
    <property type="project" value="UniProtKB"/>
</dbReference>
<dbReference type="GO" id="GO:0016310">
    <property type="term" value="P:phosphorylation"/>
    <property type="evidence" value="ECO:0000250"/>
    <property type="project" value="UniProtKB"/>
</dbReference>
<dbReference type="GO" id="GO:0033235">
    <property type="term" value="P:positive regulation of protein sumoylation"/>
    <property type="evidence" value="ECO:0007669"/>
    <property type="project" value="Ensembl"/>
</dbReference>
<dbReference type="GO" id="GO:0036010">
    <property type="term" value="P:protein localization to endosome"/>
    <property type="evidence" value="ECO:0007669"/>
    <property type="project" value="Ensembl"/>
</dbReference>
<dbReference type="CDD" id="cd04016">
    <property type="entry name" value="C2_Tollip"/>
    <property type="match status" value="1"/>
</dbReference>
<dbReference type="CDD" id="cd14363">
    <property type="entry name" value="CUE_TOLIP"/>
    <property type="match status" value="1"/>
</dbReference>
<dbReference type="FunFam" id="1.10.8.10:FF:000036">
    <property type="entry name" value="Toll-interacting protein-like Protein"/>
    <property type="match status" value="1"/>
</dbReference>
<dbReference type="FunFam" id="2.60.40.150:FF:000055">
    <property type="entry name" value="Toll-interacting protein-like Protein"/>
    <property type="match status" value="1"/>
</dbReference>
<dbReference type="Gene3D" id="2.60.40.150">
    <property type="entry name" value="C2 domain"/>
    <property type="match status" value="1"/>
</dbReference>
<dbReference type="Gene3D" id="1.10.8.10">
    <property type="entry name" value="DNA helicase RuvA subunit, C-terminal domain"/>
    <property type="match status" value="1"/>
</dbReference>
<dbReference type="InterPro" id="IPR000008">
    <property type="entry name" value="C2_dom"/>
</dbReference>
<dbReference type="InterPro" id="IPR035892">
    <property type="entry name" value="C2_domain_sf"/>
</dbReference>
<dbReference type="InterPro" id="IPR003892">
    <property type="entry name" value="CUE"/>
</dbReference>
<dbReference type="InterPro" id="IPR041799">
    <property type="entry name" value="TOLIP_CUE"/>
</dbReference>
<dbReference type="InterPro" id="IPR037301">
    <property type="entry name" value="Tollip_C2"/>
</dbReference>
<dbReference type="InterPro" id="IPR009060">
    <property type="entry name" value="UBA-like_sf"/>
</dbReference>
<dbReference type="PANTHER" id="PTHR16461">
    <property type="entry name" value="TOLL-INTERACTING PROTEIN"/>
    <property type="match status" value="1"/>
</dbReference>
<dbReference type="PANTHER" id="PTHR16461:SF5">
    <property type="entry name" value="TOLL-INTERACTING PROTEIN"/>
    <property type="match status" value="1"/>
</dbReference>
<dbReference type="Pfam" id="PF00168">
    <property type="entry name" value="C2"/>
    <property type="match status" value="1"/>
</dbReference>
<dbReference type="Pfam" id="PF02845">
    <property type="entry name" value="CUE"/>
    <property type="match status" value="1"/>
</dbReference>
<dbReference type="SMART" id="SM00239">
    <property type="entry name" value="C2"/>
    <property type="match status" value="1"/>
</dbReference>
<dbReference type="SMART" id="SM00546">
    <property type="entry name" value="CUE"/>
    <property type="match status" value="1"/>
</dbReference>
<dbReference type="SUPFAM" id="SSF49562">
    <property type="entry name" value="C2 domain (Calcium/lipid-binding domain, CaLB)"/>
    <property type="match status" value="1"/>
</dbReference>
<dbReference type="SUPFAM" id="SSF46934">
    <property type="entry name" value="UBA-like"/>
    <property type="match status" value="1"/>
</dbReference>
<dbReference type="PROSITE" id="PS50004">
    <property type="entry name" value="C2"/>
    <property type="match status" value="1"/>
</dbReference>
<dbReference type="PROSITE" id="PS51140">
    <property type="entry name" value="CUE"/>
    <property type="match status" value="1"/>
</dbReference>
<feature type="initiator methionine" description="Removed" evidence="2">
    <location>
        <position position="1"/>
    </location>
</feature>
<feature type="chain" id="PRO_0000072626" description="Toll-interacting protein">
    <location>
        <begin position="2"/>
        <end position="274"/>
    </location>
</feature>
<feature type="domain" description="C2" evidence="3">
    <location>
        <begin position="35"/>
        <end position="152"/>
    </location>
</feature>
<feature type="domain" description="CUE" evidence="4">
    <location>
        <begin position="229"/>
        <end position="272"/>
    </location>
</feature>
<feature type="short sequence motif" description="AIM1">
    <location>
        <begin position="133"/>
        <end position="136"/>
    </location>
</feature>
<feature type="short sequence motif" description="AIM2">
    <location>
        <begin position="151"/>
        <end position="154"/>
    </location>
</feature>
<feature type="modified residue" description="N-acetylalanine" evidence="2">
    <location>
        <position position="2"/>
    </location>
</feature>
<feature type="modified residue" description="Phosphoserine" evidence="1">
    <location>
        <position position="274"/>
    </location>
</feature>
<protein>
    <recommendedName>
        <fullName>Toll-interacting protein</fullName>
    </recommendedName>
</protein>
<proteinExistence type="evidence at protein level"/>
<gene>
    <name type="primary">Tollip</name>
</gene>
<reference key="1">
    <citation type="journal article" date="2000" name="Nat. Cell Biol.">
        <title>Tollip, a new component of the IL-1R1 pathway, links IRAK to the IL-1 receptor.</title>
        <authorList>
            <person name="Burns K."/>
            <person name="Clatworthy J."/>
            <person name="Martin L."/>
            <person name="Martinon F."/>
            <person name="Plumpton C."/>
            <person name="Maschera B."/>
            <person name="Lewis A."/>
            <person name="Ray K."/>
            <person name="Tschopp J."/>
            <person name="Volpe F."/>
        </authorList>
    </citation>
    <scope>NUCLEOTIDE SEQUENCE [MRNA]</scope>
    <source>
        <strain>Swiss Webster</strain>
    </source>
</reference>
<reference key="2">
    <citation type="journal article" date="2005" name="Science">
        <title>The transcriptional landscape of the mammalian genome.</title>
        <authorList>
            <person name="Carninci P."/>
            <person name="Kasukawa T."/>
            <person name="Katayama S."/>
            <person name="Gough J."/>
            <person name="Frith M.C."/>
            <person name="Maeda N."/>
            <person name="Oyama R."/>
            <person name="Ravasi T."/>
            <person name="Lenhard B."/>
            <person name="Wells C."/>
            <person name="Kodzius R."/>
            <person name="Shimokawa K."/>
            <person name="Bajic V.B."/>
            <person name="Brenner S.E."/>
            <person name="Batalov S."/>
            <person name="Forrest A.R."/>
            <person name="Zavolan M."/>
            <person name="Davis M.J."/>
            <person name="Wilming L.G."/>
            <person name="Aidinis V."/>
            <person name="Allen J.E."/>
            <person name="Ambesi-Impiombato A."/>
            <person name="Apweiler R."/>
            <person name="Aturaliya R.N."/>
            <person name="Bailey T.L."/>
            <person name="Bansal M."/>
            <person name="Baxter L."/>
            <person name="Beisel K.W."/>
            <person name="Bersano T."/>
            <person name="Bono H."/>
            <person name="Chalk A.M."/>
            <person name="Chiu K.P."/>
            <person name="Choudhary V."/>
            <person name="Christoffels A."/>
            <person name="Clutterbuck D.R."/>
            <person name="Crowe M.L."/>
            <person name="Dalla E."/>
            <person name="Dalrymple B.P."/>
            <person name="de Bono B."/>
            <person name="Della Gatta G."/>
            <person name="di Bernardo D."/>
            <person name="Down T."/>
            <person name="Engstrom P."/>
            <person name="Fagiolini M."/>
            <person name="Faulkner G."/>
            <person name="Fletcher C.F."/>
            <person name="Fukushima T."/>
            <person name="Furuno M."/>
            <person name="Futaki S."/>
            <person name="Gariboldi M."/>
            <person name="Georgii-Hemming P."/>
            <person name="Gingeras T.R."/>
            <person name="Gojobori T."/>
            <person name="Green R.E."/>
            <person name="Gustincich S."/>
            <person name="Harbers M."/>
            <person name="Hayashi Y."/>
            <person name="Hensch T.K."/>
            <person name="Hirokawa N."/>
            <person name="Hill D."/>
            <person name="Huminiecki L."/>
            <person name="Iacono M."/>
            <person name="Ikeo K."/>
            <person name="Iwama A."/>
            <person name="Ishikawa T."/>
            <person name="Jakt M."/>
            <person name="Kanapin A."/>
            <person name="Katoh M."/>
            <person name="Kawasawa Y."/>
            <person name="Kelso J."/>
            <person name="Kitamura H."/>
            <person name="Kitano H."/>
            <person name="Kollias G."/>
            <person name="Krishnan S.P."/>
            <person name="Kruger A."/>
            <person name="Kummerfeld S.K."/>
            <person name="Kurochkin I.V."/>
            <person name="Lareau L.F."/>
            <person name="Lazarevic D."/>
            <person name="Lipovich L."/>
            <person name="Liu J."/>
            <person name="Liuni S."/>
            <person name="McWilliam S."/>
            <person name="Madan Babu M."/>
            <person name="Madera M."/>
            <person name="Marchionni L."/>
            <person name="Matsuda H."/>
            <person name="Matsuzawa S."/>
            <person name="Miki H."/>
            <person name="Mignone F."/>
            <person name="Miyake S."/>
            <person name="Morris K."/>
            <person name="Mottagui-Tabar S."/>
            <person name="Mulder N."/>
            <person name="Nakano N."/>
            <person name="Nakauchi H."/>
            <person name="Ng P."/>
            <person name="Nilsson R."/>
            <person name="Nishiguchi S."/>
            <person name="Nishikawa S."/>
            <person name="Nori F."/>
            <person name="Ohara O."/>
            <person name="Okazaki Y."/>
            <person name="Orlando V."/>
            <person name="Pang K.C."/>
            <person name="Pavan W.J."/>
            <person name="Pavesi G."/>
            <person name="Pesole G."/>
            <person name="Petrovsky N."/>
            <person name="Piazza S."/>
            <person name="Reed J."/>
            <person name="Reid J.F."/>
            <person name="Ring B.Z."/>
            <person name="Ringwald M."/>
            <person name="Rost B."/>
            <person name="Ruan Y."/>
            <person name="Salzberg S.L."/>
            <person name="Sandelin A."/>
            <person name="Schneider C."/>
            <person name="Schoenbach C."/>
            <person name="Sekiguchi K."/>
            <person name="Semple C.A."/>
            <person name="Seno S."/>
            <person name="Sessa L."/>
            <person name="Sheng Y."/>
            <person name="Shibata Y."/>
            <person name="Shimada H."/>
            <person name="Shimada K."/>
            <person name="Silva D."/>
            <person name="Sinclair B."/>
            <person name="Sperling S."/>
            <person name="Stupka E."/>
            <person name="Sugiura K."/>
            <person name="Sultana R."/>
            <person name="Takenaka Y."/>
            <person name="Taki K."/>
            <person name="Tammoja K."/>
            <person name="Tan S.L."/>
            <person name="Tang S."/>
            <person name="Taylor M.S."/>
            <person name="Tegner J."/>
            <person name="Teichmann S.A."/>
            <person name="Ueda H.R."/>
            <person name="van Nimwegen E."/>
            <person name="Verardo R."/>
            <person name="Wei C.L."/>
            <person name="Yagi K."/>
            <person name="Yamanishi H."/>
            <person name="Zabarovsky E."/>
            <person name="Zhu S."/>
            <person name="Zimmer A."/>
            <person name="Hide W."/>
            <person name="Bult C."/>
            <person name="Grimmond S.M."/>
            <person name="Teasdale R.D."/>
            <person name="Liu E.T."/>
            <person name="Brusic V."/>
            <person name="Quackenbush J."/>
            <person name="Wahlestedt C."/>
            <person name="Mattick J.S."/>
            <person name="Hume D.A."/>
            <person name="Kai C."/>
            <person name="Sasaki D."/>
            <person name="Tomaru Y."/>
            <person name="Fukuda S."/>
            <person name="Kanamori-Katayama M."/>
            <person name="Suzuki M."/>
            <person name="Aoki J."/>
            <person name="Arakawa T."/>
            <person name="Iida J."/>
            <person name="Imamura K."/>
            <person name="Itoh M."/>
            <person name="Kato T."/>
            <person name="Kawaji H."/>
            <person name="Kawagashira N."/>
            <person name="Kawashima T."/>
            <person name="Kojima M."/>
            <person name="Kondo S."/>
            <person name="Konno H."/>
            <person name="Nakano K."/>
            <person name="Ninomiya N."/>
            <person name="Nishio T."/>
            <person name="Okada M."/>
            <person name="Plessy C."/>
            <person name="Shibata K."/>
            <person name="Shiraki T."/>
            <person name="Suzuki S."/>
            <person name="Tagami M."/>
            <person name="Waki K."/>
            <person name="Watahiki A."/>
            <person name="Okamura-Oho Y."/>
            <person name="Suzuki H."/>
            <person name="Kawai J."/>
            <person name="Hayashizaki Y."/>
        </authorList>
    </citation>
    <scope>NUCLEOTIDE SEQUENCE [LARGE SCALE MRNA]</scope>
    <source>
        <strain>C57BL/6J</strain>
        <tissue>Corpora quadrigemina</tissue>
        <tissue>Testis</tissue>
    </source>
</reference>
<reference key="3">
    <citation type="journal article" date="2004" name="Genome Res.">
        <title>The status, quality, and expansion of the NIH full-length cDNA project: the Mammalian Gene Collection (MGC).</title>
        <authorList>
            <consortium name="The MGC Project Team"/>
        </authorList>
    </citation>
    <scope>NUCLEOTIDE SEQUENCE [LARGE SCALE MRNA]</scope>
    <source>
        <tissue>Embryo</tissue>
    </source>
</reference>
<reference key="4">
    <citation type="journal article" date="2010" name="Cell">
        <title>A tissue-specific atlas of mouse protein phosphorylation and expression.</title>
        <authorList>
            <person name="Huttlin E.L."/>
            <person name="Jedrychowski M.P."/>
            <person name="Elias J.E."/>
            <person name="Goswami T."/>
            <person name="Rad R."/>
            <person name="Beausoleil S.A."/>
            <person name="Villen J."/>
            <person name="Haas W."/>
            <person name="Sowa M.E."/>
            <person name="Gygi S.P."/>
        </authorList>
    </citation>
    <scope>IDENTIFICATION BY MASS SPECTROMETRY [LARGE SCALE ANALYSIS]</scope>
    <source>
        <tissue>Brain</tissue>
        <tissue>Brown adipose tissue</tissue>
        <tissue>Heart</tissue>
        <tissue>Kidney</tissue>
        <tissue>Liver</tissue>
        <tissue>Lung</tissue>
        <tissue>Pancreas</tissue>
        <tissue>Spleen</tissue>
        <tissue>Testis</tissue>
    </source>
</reference>
<evidence type="ECO:0000250" key="1">
    <source>
        <dbReference type="UniProtKB" id="A2RUW1"/>
    </source>
</evidence>
<evidence type="ECO:0000250" key="2">
    <source>
        <dbReference type="UniProtKB" id="Q9H0E2"/>
    </source>
</evidence>
<evidence type="ECO:0000255" key="3">
    <source>
        <dbReference type="PROSITE-ProRule" id="PRU00041"/>
    </source>
</evidence>
<evidence type="ECO:0000255" key="4">
    <source>
        <dbReference type="PROSITE-ProRule" id="PRU00468"/>
    </source>
</evidence>
<evidence type="ECO:0000305" key="5"/>
<organism>
    <name type="scientific">Mus musculus</name>
    <name type="common">Mouse</name>
    <dbReference type="NCBI Taxonomy" id="10090"/>
    <lineage>
        <taxon>Eukaryota</taxon>
        <taxon>Metazoa</taxon>
        <taxon>Chordata</taxon>
        <taxon>Craniata</taxon>
        <taxon>Vertebrata</taxon>
        <taxon>Euteleostomi</taxon>
        <taxon>Mammalia</taxon>
        <taxon>Eutheria</taxon>
        <taxon>Euarchontoglires</taxon>
        <taxon>Glires</taxon>
        <taxon>Rodentia</taxon>
        <taxon>Myomorpha</taxon>
        <taxon>Muroidea</taxon>
        <taxon>Muridae</taxon>
        <taxon>Murinae</taxon>
        <taxon>Mus</taxon>
        <taxon>Mus</taxon>
    </lineage>
</organism>
<comment type="function">
    <text evidence="2">Component of the signaling pathway of IL-1 and Toll-like receptors (By similarity). Inhibits cell activation by microbial products (By similarity). Recruits IRAK1 to the IL-1 receptor complex (By similarity). Inhibits IRAK1 phosphorylation and kinase activity. Connects the ubiquitin pathway to autophagy by functioning as a ubiquitin-ATG8 family adapter and thus mediating autophagic clearance of ubiquitin conjugates (By similarity). The TOLLIP-dependent selective autophagy pathway plays an important role in clearance of cytotoxic polyQ proteins aggregates (By similarity). In a complex with TOM1, recruits ubiquitin-conjugated proteins onto early endosomes (By similarity). Binds to phosphatidylinositol 3-phosphate (PtdIns(3)P) (By similarity).</text>
</comment>
<comment type="subunit">
    <text evidence="2">Oligomerizes. Binds to TLR2 and the TLR4-MD2 complex via its C-terminus. Exists as complex with IRAK1 in unstimulated cells. Upon IL-1 signaling, Tollip binds to the activated IL-1 receptor complex containing IL-1RI, IL-1RacP and the adapter protein MyD88, where it interacts with the TIR domain of IL-1RacP. MyD88 then triggers IRAK1 autophosphorylation, which in turn leads to the dissociation of IRAK1 from Tollip and IL-1RAcP. Found in a complex with TOM1; interacts (via N-terminus) with TOM1 (via GAT domain); the interactions leads to TOM1-recruitment to endosomes and inhibition of TOLLIP binding to PtdIns(3)P (By similarity). Interacts with TOM1L2 (By similarity). Interacts with ATG8 family proteins (via the AIM motifs), and ubiquitin (via the CUE domain) (By similarity). Interacts with LRBA (By similarity). Interacts with ZNF268; this interaction leads to degradation by Tollip-mediated selective autophagy system (By similarity).</text>
</comment>
<comment type="interaction">
    <interactant intactId="EBI-74272">
        <id>Q9QZ06</id>
    </interactant>
    <interactant intactId="EBI-525035">
        <id>Q61730</id>
        <label>Il1rap</label>
    </interactant>
    <organismsDiffer>false</organismsDiffer>
    <experiments>2</experiments>
</comment>
<comment type="interaction">
    <interactant intactId="EBI-74272">
        <id>Q9QZ06</id>
    </interactant>
    <interactant intactId="EBI-448533">
        <id>Q62406</id>
        <label>Irak1</label>
    </interactant>
    <organismsDiffer>false</organismsDiffer>
    <experiments>2</experiments>
</comment>
<comment type="interaction">
    <interactant intactId="EBI-74272">
        <id>Q9QZ06</id>
    </interactant>
    <interactant intactId="EBI-74264">
        <id>O88746</id>
        <label>Tom1</label>
    </interactant>
    <organismsDiffer>false</organismsDiffer>
    <experiments>2</experiments>
</comment>
<comment type="subcellular location">
    <subcellularLocation>
        <location evidence="2">Cytoplasm</location>
    </subcellularLocation>
    <subcellularLocation>
        <location evidence="2">Endosome</location>
    </subcellularLocation>
    <subcellularLocation>
        <location evidence="2">Early endosome</location>
    </subcellularLocation>
    <text evidence="2">Localized to endo/exosomal vesicles.</text>
</comment>
<comment type="tissue specificity">
    <text>Detected in heart, brain, spleen, lung, liver, skeletal muscle, kidney, thymus, pancreas and testis.</text>
</comment>
<comment type="domain">
    <text evidence="2">Both ATG8-interaction motifs (AIM1 and AIM2) are required for the association with ATG8 family proteins.</text>
</comment>
<comment type="domain">
    <text evidence="2">The N-terminal TOM1-binding domain (residues 1-53) is a disordered domain that partially folds when bound to the GAT domain of TOM1.</text>
</comment>
<comment type="similarity">
    <text evidence="5">Belongs to the tollip family.</text>
</comment>
<accession>Q9QZ06</accession>
<accession>Q543N1</accession>
<accession>Q9D5P5</accession>
<name>TOLIP_MOUSE</name>